<organism>
    <name type="scientific">Ruegeria sp. (strain TM1040)</name>
    <name type="common">Silicibacter sp.</name>
    <dbReference type="NCBI Taxonomy" id="292414"/>
    <lineage>
        <taxon>Bacteria</taxon>
        <taxon>Pseudomonadati</taxon>
        <taxon>Pseudomonadota</taxon>
        <taxon>Alphaproteobacteria</taxon>
        <taxon>Rhodobacterales</taxon>
        <taxon>Roseobacteraceae</taxon>
        <taxon>Ruegeria</taxon>
    </lineage>
</organism>
<comment type="catalytic activity">
    <reaction evidence="1">
        <text>tRNA(Phe) + L-phenylalanine + ATP = L-phenylalanyl-tRNA(Phe) + AMP + diphosphate + H(+)</text>
        <dbReference type="Rhea" id="RHEA:19413"/>
        <dbReference type="Rhea" id="RHEA-COMP:9668"/>
        <dbReference type="Rhea" id="RHEA-COMP:9699"/>
        <dbReference type="ChEBI" id="CHEBI:15378"/>
        <dbReference type="ChEBI" id="CHEBI:30616"/>
        <dbReference type="ChEBI" id="CHEBI:33019"/>
        <dbReference type="ChEBI" id="CHEBI:58095"/>
        <dbReference type="ChEBI" id="CHEBI:78442"/>
        <dbReference type="ChEBI" id="CHEBI:78531"/>
        <dbReference type="ChEBI" id="CHEBI:456215"/>
        <dbReference type="EC" id="6.1.1.20"/>
    </reaction>
</comment>
<comment type="cofactor">
    <cofactor evidence="1">
        <name>Mg(2+)</name>
        <dbReference type="ChEBI" id="CHEBI:18420"/>
    </cofactor>
    <text evidence="1">Binds 2 magnesium ions per tetramer.</text>
</comment>
<comment type="subunit">
    <text evidence="1">Tetramer of two alpha and two beta subunits.</text>
</comment>
<comment type="subcellular location">
    <subcellularLocation>
        <location evidence="1">Cytoplasm</location>
    </subcellularLocation>
</comment>
<comment type="similarity">
    <text evidence="1">Belongs to the class-II aminoacyl-tRNA synthetase family. Phe-tRNA synthetase alpha subunit type 1 subfamily.</text>
</comment>
<reference key="1">
    <citation type="submission" date="2006-05" db="EMBL/GenBank/DDBJ databases">
        <title>Complete sequence of chromosome of Silicibacter sp. TM1040.</title>
        <authorList>
            <consortium name="US DOE Joint Genome Institute"/>
            <person name="Copeland A."/>
            <person name="Lucas S."/>
            <person name="Lapidus A."/>
            <person name="Barry K."/>
            <person name="Detter J.C."/>
            <person name="Glavina del Rio T."/>
            <person name="Hammon N."/>
            <person name="Israni S."/>
            <person name="Dalin E."/>
            <person name="Tice H."/>
            <person name="Pitluck S."/>
            <person name="Brettin T."/>
            <person name="Bruce D."/>
            <person name="Han C."/>
            <person name="Tapia R."/>
            <person name="Goodwin L."/>
            <person name="Thompson L.S."/>
            <person name="Gilna P."/>
            <person name="Schmutz J."/>
            <person name="Larimer F."/>
            <person name="Land M."/>
            <person name="Hauser L."/>
            <person name="Kyrpides N."/>
            <person name="Kim E."/>
            <person name="Belas R."/>
            <person name="Moran M.A."/>
            <person name="Buchan A."/>
            <person name="Gonzalez J.M."/>
            <person name="Schell M.A."/>
            <person name="Sun F."/>
            <person name="Richardson P."/>
        </authorList>
    </citation>
    <scope>NUCLEOTIDE SEQUENCE [LARGE SCALE GENOMIC DNA]</scope>
    <source>
        <strain>TM1040</strain>
    </source>
</reference>
<proteinExistence type="inferred from homology"/>
<dbReference type="EC" id="6.1.1.20" evidence="1"/>
<dbReference type="EMBL" id="CP000377">
    <property type="protein sequence ID" value="ABF65243.1"/>
    <property type="molecule type" value="Genomic_DNA"/>
</dbReference>
<dbReference type="RefSeq" id="WP_011539830.1">
    <property type="nucleotide sequence ID" value="NC_008044.1"/>
</dbReference>
<dbReference type="SMR" id="Q1GDM3"/>
<dbReference type="STRING" id="292414.TM1040_2511"/>
<dbReference type="KEGG" id="sit:TM1040_2511"/>
<dbReference type="eggNOG" id="COG0016">
    <property type="taxonomic scope" value="Bacteria"/>
</dbReference>
<dbReference type="HOGENOM" id="CLU_025086_0_1_5"/>
<dbReference type="OrthoDB" id="9800719at2"/>
<dbReference type="Proteomes" id="UP000000636">
    <property type="component" value="Chromosome"/>
</dbReference>
<dbReference type="GO" id="GO:0005737">
    <property type="term" value="C:cytoplasm"/>
    <property type="evidence" value="ECO:0007669"/>
    <property type="project" value="UniProtKB-SubCell"/>
</dbReference>
<dbReference type="GO" id="GO:0005524">
    <property type="term" value="F:ATP binding"/>
    <property type="evidence" value="ECO:0007669"/>
    <property type="project" value="UniProtKB-UniRule"/>
</dbReference>
<dbReference type="GO" id="GO:0000287">
    <property type="term" value="F:magnesium ion binding"/>
    <property type="evidence" value="ECO:0007669"/>
    <property type="project" value="UniProtKB-UniRule"/>
</dbReference>
<dbReference type="GO" id="GO:0004826">
    <property type="term" value="F:phenylalanine-tRNA ligase activity"/>
    <property type="evidence" value="ECO:0007669"/>
    <property type="project" value="UniProtKB-UniRule"/>
</dbReference>
<dbReference type="GO" id="GO:0000049">
    <property type="term" value="F:tRNA binding"/>
    <property type="evidence" value="ECO:0007669"/>
    <property type="project" value="InterPro"/>
</dbReference>
<dbReference type="GO" id="GO:0006432">
    <property type="term" value="P:phenylalanyl-tRNA aminoacylation"/>
    <property type="evidence" value="ECO:0007669"/>
    <property type="project" value="UniProtKB-UniRule"/>
</dbReference>
<dbReference type="CDD" id="cd00496">
    <property type="entry name" value="PheRS_alpha_core"/>
    <property type="match status" value="1"/>
</dbReference>
<dbReference type="FunFam" id="3.30.930.10:FF:000003">
    <property type="entry name" value="Phenylalanine--tRNA ligase alpha subunit"/>
    <property type="match status" value="1"/>
</dbReference>
<dbReference type="Gene3D" id="3.30.930.10">
    <property type="entry name" value="Bira Bifunctional Protein, Domain 2"/>
    <property type="match status" value="1"/>
</dbReference>
<dbReference type="HAMAP" id="MF_00281">
    <property type="entry name" value="Phe_tRNA_synth_alpha1"/>
    <property type="match status" value="1"/>
</dbReference>
<dbReference type="InterPro" id="IPR006195">
    <property type="entry name" value="aa-tRNA-synth_II"/>
</dbReference>
<dbReference type="InterPro" id="IPR045864">
    <property type="entry name" value="aa-tRNA-synth_II/BPL/LPL"/>
</dbReference>
<dbReference type="InterPro" id="IPR004529">
    <property type="entry name" value="Phe-tRNA-synth_IIc_asu"/>
</dbReference>
<dbReference type="InterPro" id="IPR004188">
    <property type="entry name" value="Phe-tRNA_ligase_II_N"/>
</dbReference>
<dbReference type="InterPro" id="IPR022911">
    <property type="entry name" value="Phe_tRNA_ligase_alpha1_bac"/>
</dbReference>
<dbReference type="InterPro" id="IPR002319">
    <property type="entry name" value="Phenylalanyl-tRNA_Synthase"/>
</dbReference>
<dbReference type="InterPro" id="IPR010978">
    <property type="entry name" value="tRNA-bd_arm"/>
</dbReference>
<dbReference type="NCBIfam" id="TIGR00468">
    <property type="entry name" value="pheS"/>
    <property type="match status" value="1"/>
</dbReference>
<dbReference type="PANTHER" id="PTHR11538:SF41">
    <property type="entry name" value="PHENYLALANINE--TRNA LIGASE, MITOCHONDRIAL"/>
    <property type="match status" value="1"/>
</dbReference>
<dbReference type="PANTHER" id="PTHR11538">
    <property type="entry name" value="PHENYLALANYL-TRNA SYNTHETASE"/>
    <property type="match status" value="1"/>
</dbReference>
<dbReference type="Pfam" id="PF02912">
    <property type="entry name" value="Phe_tRNA-synt_N"/>
    <property type="match status" value="1"/>
</dbReference>
<dbReference type="Pfam" id="PF01409">
    <property type="entry name" value="tRNA-synt_2d"/>
    <property type="match status" value="1"/>
</dbReference>
<dbReference type="SUPFAM" id="SSF55681">
    <property type="entry name" value="Class II aaRS and biotin synthetases"/>
    <property type="match status" value="1"/>
</dbReference>
<dbReference type="SUPFAM" id="SSF46589">
    <property type="entry name" value="tRNA-binding arm"/>
    <property type="match status" value="1"/>
</dbReference>
<dbReference type="PROSITE" id="PS50862">
    <property type="entry name" value="AA_TRNA_LIGASE_II"/>
    <property type="match status" value="1"/>
</dbReference>
<name>SYFA_RUEST</name>
<keyword id="KW-0030">Aminoacyl-tRNA synthetase</keyword>
<keyword id="KW-0067">ATP-binding</keyword>
<keyword id="KW-0963">Cytoplasm</keyword>
<keyword id="KW-0436">Ligase</keyword>
<keyword id="KW-0460">Magnesium</keyword>
<keyword id="KW-0479">Metal-binding</keyword>
<keyword id="KW-0547">Nucleotide-binding</keyword>
<keyword id="KW-0648">Protein biosynthesis</keyword>
<keyword id="KW-1185">Reference proteome</keyword>
<evidence type="ECO:0000255" key="1">
    <source>
        <dbReference type="HAMAP-Rule" id="MF_00281"/>
    </source>
</evidence>
<feature type="chain" id="PRO_1000006901" description="Phenylalanine--tRNA ligase alpha subunit">
    <location>
        <begin position="1"/>
        <end position="357"/>
    </location>
</feature>
<feature type="binding site" evidence="1">
    <location>
        <position position="257"/>
    </location>
    <ligand>
        <name>Mg(2+)</name>
        <dbReference type="ChEBI" id="CHEBI:18420"/>
        <note>shared with beta subunit</note>
    </ligand>
</feature>
<protein>
    <recommendedName>
        <fullName evidence="1">Phenylalanine--tRNA ligase alpha subunit</fullName>
        <ecNumber evidence="1">6.1.1.20</ecNumber>
    </recommendedName>
    <alternativeName>
        <fullName evidence="1">Phenylalanyl-tRNA synthetase alpha subunit</fullName>
        <shortName evidence="1">PheRS</shortName>
    </alternativeName>
</protein>
<accession>Q1GDM3</accession>
<sequence>MDDLKAKYLGQIAEATDENALEAVRLAAVGKKGEVALKMRELGKMTPEERQVAGPALNALKDEINAALAAKKAALGDAALDERLRSEWLDVTLPTRPRRQGSIHPISQASEELTAIFAEMGFSAQEGPRVDTDWYNFDALNIPGHHPARAEMDTFYMHRAEGDDRPPHVLRTHTSPVQIRSMEKLGAPLRIICPGGVYRADYDQTHTPMFHQVEGLALDENISMANLKWVLEEFVKSFFEVDEVELRFRASHFPFTEPSAEVDIRCSWDNGQLKIGEGDDWLEILGSGMVHPKVIAAGGIDPEKYQGFAFGIGIDRLAMLKYGIPDLRAFFESDLRWLRHYGFSCLDVPTLHGGLSR</sequence>
<gene>
    <name evidence="1" type="primary">pheS</name>
    <name type="ordered locus">TM1040_2511</name>
</gene>